<comment type="function">
    <text>Required for chlorophyll b degradation.</text>
</comment>
<comment type="catalytic activity">
    <reaction evidence="4">
        <text>7(1)-hydroxychlorophyllide a + NAD(+) = chlorophyllide b + NADH + H(+)</text>
        <dbReference type="Rhea" id="RHEA:24768"/>
        <dbReference type="ChEBI" id="CHEBI:15378"/>
        <dbReference type="ChEBI" id="CHEBI:57540"/>
        <dbReference type="ChEBI" id="CHEBI:57945"/>
        <dbReference type="ChEBI" id="CHEBI:83356"/>
        <dbReference type="ChEBI" id="CHEBI:83357"/>
        <dbReference type="EC" id="1.1.1.294"/>
    </reaction>
</comment>
<comment type="catalytic activity">
    <reaction evidence="4">
        <text>7(1)-hydroxychlorophyllide a + NADP(+) = chlorophyllide b + NADPH + H(+)</text>
        <dbReference type="Rhea" id="RHEA:24772"/>
        <dbReference type="ChEBI" id="CHEBI:15378"/>
        <dbReference type="ChEBI" id="CHEBI:57783"/>
        <dbReference type="ChEBI" id="CHEBI:58349"/>
        <dbReference type="ChEBI" id="CHEBI:83356"/>
        <dbReference type="ChEBI" id="CHEBI:83357"/>
        <dbReference type="EC" id="1.1.1.294"/>
    </reaction>
</comment>
<comment type="subunit">
    <text evidence="5">Interacts with NCY1 to form a complex that acts as a chlorophyll b reductase.</text>
</comment>
<comment type="subcellular location">
    <subcellularLocation>
        <location evidence="5">Plastid</location>
        <location evidence="5">Chloroplast thylakoid membrane</location>
        <topology evidence="5">Peripheral membrane protein</topology>
        <orientation evidence="5">Stromal side</orientation>
    </subcellularLocation>
</comment>
<comment type="tissue specificity">
    <text evidence="4">Expressed in leaves and stems. Also detected in non-photosynthetic tissues such as roots.</text>
</comment>
<comment type="developmental stage">
    <text evidence="4">Strongly expressed in late-senescing leaves.</text>
</comment>
<comment type="induction">
    <text evidence="5">Up-regulated by dark treatment.</text>
</comment>
<comment type="disruption phenotype">
    <text evidence="5">Stay-green phenotype during senescence. Grana stacks fused into large stable stacks during semescence.</text>
</comment>
<comment type="miscellaneous">
    <text>Chlorophyll b reductase activity detected in vitro with a recombinant protein produced in a heterologous system.</text>
</comment>
<comment type="similarity">
    <text evidence="6">Belongs to the short-chain dehydrogenases/reductases (SDR) family.</text>
</comment>
<comment type="sequence caution" evidence="6">
    <conflict type="erroneous gene model prediction">
        <sequence resource="EMBL-CDS" id="AAT78834"/>
    </conflict>
</comment>
<comment type="sequence caution" evidence="6">
    <conflict type="erroneous gene model prediction">
        <sequence resource="EMBL-CDS" id="ABF97956"/>
    </conflict>
</comment>
<sequence>MAATAAYLPLRAQAQVGLAPLRPSGSAAAGARLPGRTARRRLAARGGPEAAGIRAEAVPGGGGVARRAAMVPPYNVLITGSTKGIGYALAKEFLKAGDNVVICSRSAERVESAVTDLKKEFGEQHVWGIVCDVREGKDVKALVDFARDKMKYIDIWINNAGSNAYSYKPLVETSDEALMEVITTNTLGLMICCREAINMMRNQPRGGHIFNIDGAGSDGRPTPRFAAYGATKRSVVHLTKSLQAELQMNEVNNVMVHNLSPGMVTTDLLMSGATTKQAKFFINILAEPANVVADYLVPNIRAIPTNQSMKPTYIRFLTGLKAYSRIFSRIAFGARRNKYVAED</sequence>
<proteinExistence type="evidence at protein level"/>
<keyword id="KW-0881">Chlorophyll catabolism</keyword>
<keyword id="KW-0150">Chloroplast</keyword>
<keyword id="KW-0472">Membrane</keyword>
<keyword id="KW-0520">NAD</keyword>
<keyword id="KW-0560">Oxidoreductase</keyword>
<keyword id="KW-0934">Plastid</keyword>
<keyword id="KW-1185">Reference proteome</keyword>
<keyword id="KW-0793">Thylakoid</keyword>
<keyword id="KW-0809">Transit peptide</keyword>
<protein>
    <recommendedName>
        <fullName>Chlorophyll(ide) b reductase NOL, chloroplastic</fullName>
        <ecNumber>1.1.1.294</ecNumber>
    </recommendedName>
    <alternativeName>
        <fullName>Protein NON-YELLOW COLORING 1-LIKE</fullName>
        <shortName>OsNOL</shortName>
        <shortName>Protein NYC1-LIKE</shortName>
    </alternativeName>
    <alternativeName>
        <fullName>Short-chain dehydrogenase/reductase NOL</fullName>
    </alternativeName>
</protein>
<evidence type="ECO:0000250" key="1"/>
<evidence type="ECO:0000255" key="2"/>
<evidence type="ECO:0000255" key="3">
    <source>
        <dbReference type="PROSITE-ProRule" id="PRU10001"/>
    </source>
</evidence>
<evidence type="ECO:0000269" key="4">
    <source>
    </source>
</evidence>
<evidence type="ECO:0000269" key="5">
    <source>
    </source>
</evidence>
<evidence type="ECO:0000305" key="6"/>
<feature type="transit peptide" description="Chloroplast" evidence="2">
    <location>
        <begin position="1"/>
        <end position="54"/>
    </location>
</feature>
<feature type="chain" id="PRO_0000391414" description="Chlorophyll(ide) b reductase NOL, chloroplastic">
    <location>
        <begin position="55"/>
        <end position="343"/>
    </location>
</feature>
<feature type="active site" description="Proton acceptor" evidence="3">
    <location>
        <position position="228"/>
    </location>
</feature>
<feature type="binding site" evidence="1">
    <location>
        <begin position="78"/>
        <end position="102"/>
    </location>
    <ligand>
        <name>NAD(+)</name>
        <dbReference type="ChEBI" id="CHEBI:57540"/>
    </ligand>
</feature>
<dbReference type="EC" id="1.1.1.294"/>
<dbReference type="EMBL" id="AB255026">
    <property type="protein sequence ID" value="BAF49741.1"/>
    <property type="molecule type" value="mRNA"/>
</dbReference>
<dbReference type="EMBL" id="AC120535">
    <property type="protein sequence ID" value="AAO73232.1"/>
    <property type="molecule type" value="Genomic_DNA"/>
</dbReference>
<dbReference type="EMBL" id="AC138004">
    <property type="protein sequence ID" value="AAT78833.1"/>
    <property type="molecule type" value="Genomic_DNA"/>
</dbReference>
<dbReference type="EMBL" id="AC138004">
    <property type="protein sequence ID" value="AAT78834.1"/>
    <property type="status" value="ALT_SEQ"/>
    <property type="molecule type" value="Genomic_DNA"/>
</dbReference>
<dbReference type="EMBL" id="DP000009">
    <property type="protein sequence ID" value="ABF97956.1"/>
    <property type="status" value="ALT_SEQ"/>
    <property type="molecule type" value="Genomic_DNA"/>
</dbReference>
<dbReference type="EMBL" id="AP014959">
    <property type="protein sequence ID" value="BAS85540.1"/>
    <property type="molecule type" value="Genomic_DNA"/>
</dbReference>
<dbReference type="EMBL" id="CM000140">
    <property type="protein sequence ID" value="EEE59614.1"/>
    <property type="molecule type" value="Genomic_DNA"/>
</dbReference>
<dbReference type="RefSeq" id="XP_015628274.1">
    <property type="nucleotide sequence ID" value="XM_015772788.1"/>
</dbReference>
<dbReference type="SMR" id="Q84ST4"/>
<dbReference type="FunCoup" id="Q84ST4">
    <property type="interactions" value="287"/>
</dbReference>
<dbReference type="STRING" id="39947.Q84ST4"/>
<dbReference type="PaxDb" id="39947-Q84ST4"/>
<dbReference type="EnsemblPlants" id="Os03t0654600-01">
    <property type="protein sequence ID" value="Os03t0654600-01"/>
    <property type="gene ID" value="Os03g0654600"/>
</dbReference>
<dbReference type="Gramene" id="Os03t0654600-01">
    <property type="protein sequence ID" value="Os03t0654600-01"/>
    <property type="gene ID" value="Os03g0654600"/>
</dbReference>
<dbReference type="eggNOG" id="KOG0725">
    <property type="taxonomic scope" value="Eukaryota"/>
</dbReference>
<dbReference type="HOGENOM" id="CLU_010194_2_4_1"/>
<dbReference type="InParanoid" id="Q84ST4"/>
<dbReference type="OMA" id="RWINNAG"/>
<dbReference type="OrthoDB" id="3592703at2759"/>
<dbReference type="BRENDA" id="1.1.1.294">
    <property type="organism ID" value="4460"/>
</dbReference>
<dbReference type="Proteomes" id="UP000000763">
    <property type="component" value="Chromosome 3"/>
</dbReference>
<dbReference type="Proteomes" id="UP000007752">
    <property type="component" value="Chromosome 3"/>
</dbReference>
<dbReference type="Proteomes" id="UP000059680">
    <property type="component" value="Chromosome 3"/>
</dbReference>
<dbReference type="GO" id="GO:0009535">
    <property type="term" value="C:chloroplast thylakoid membrane"/>
    <property type="evidence" value="ECO:0007669"/>
    <property type="project" value="UniProtKB-SubCell"/>
</dbReference>
<dbReference type="GO" id="GO:0034256">
    <property type="term" value="F:chlorophyll(ide) b reductase activity"/>
    <property type="evidence" value="ECO:0000314"/>
    <property type="project" value="UniProtKB"/>
</dbReference>
<dbReference type="GO" id="GO:0015996">
    <property type="term" value="P:chlorophyll catabolic process"/>
    <property type="evidence" value="ECO:0000318"/>
    <property type="project" value="GO_Central"/>
</dbReference>
<dbReference type="GO" id="GO:0010304">
    <property type="term" value="P:PSII associated light-harvesting complex II catabolic process"/>
    <property type="evidence" value="ECO:0000318"/>
    <property type="project" value="GO_Central"/>
</dbReference>
<dbReference type="CDD" id="cd05233">
    <property type="entry name" value="SDR_c"/>
    <property type="match status" value="1"/>
</dbReference>
<dbReference type="FunFam" id="3.40.50.720:FF:000223">
    <property type="entry name" value="Chlorophyll(Ide) b reductase NOL, chloroplastic"/>
    <property type="match status" value="1"/>
</dbReference>
<dbReference type="Gene3D" id="3.40.50.720">
    <property type="entry name" value="NAD(P)-binding Rossmann-like Domain"/>
    <property type="match status" value="1"/>
</dbReference>
<dbReference type="InterPro" id="IPR052625">
    <property type="entry name" value="Chl_b_Red"/>
</dbReference>
<dbReference type="InterPro" id="IPR036291">
    <property type="entry name" value="NAD(P)-bd_dom_sf"/>
</dbReference>
<dbReference type="InterPro" id="IPR020904">
    <property type="entry name" value="Sc_DH/Rdtase_CS"/>
</dbReference>
<dbReference type="InterPro" id="IPR002347">
    <property type="entry name" value="SDR_fam"/>
</dbReference>
<dbReference type="PANTHER" id="PTHR24314:SF15">
    <property type="entry name" value="CHLOROPHYLL(IDE) B REDUCTASE NOL, CHLOROPLASTIC"/>
    <property type="match status" value="1"/>
</dbReference>
<dbReference type="PANTHER" id="PTHR24314">
    <property type="entry name" value="NON-SPECIFIC LIPID TRANSFER PROTEIN-RELATED"/>
    <property type="match status" value="1"/>
</dbReference>
<dbReference type="Pfam" id="PF00106">
    <property type="entry name" value="adh_short"/>
    <property type="match status" value="1"/>
</dbReference>
<dbReference type="PRINTS" id="PR00081">
    <property type="entry name" value="GDHRDH"/>
</dbReference>
<dbReference type="PRINTS" id="PR00080">
    <property type="entry name" value="SDRFAMILY"/>
</dbReference>
<dbReference type="SUPFAM" id="SSF51735">
    <property type="entry name" value="NAD(P)-binding Rossmann-fold domains"/>
    <property type="match status" value="1"/>
</dbReference>
<dbReference type="PROSITE" id="PS00061">
    <property type="entry name" value="ADH_SHORT"/>
    <property type="match status" value="1"/>
</dbReference>
<accession>Q84ST4</accession>
<accession>A0A0P0W0V8</accession>
<accession>Q10FV1</accession>
<accession>Q6AT49</accession>
<reference key="1">
    <citation type="journal article" date="2007" name="Plant Cell">
        <title>Rice NON-YELLOW COLORING1 is involved in light-harvesting complex II and grana degradation during leaf senescence.</title>
        <authorList>
            <person name="Kusaba M."/>
            <person name="Ito H."/>
            <person name="Morita R."/>
            <person name="Iida S."/>
            <person name="Sato Y."/>
            <person name="Fujimoto M."/>
            <person name="Kawasaki S."/>
            <person name="Tanaka R."/>
            <person name="Hirochika H."/>
            <person name="Nishimura M."/>
            <person name="Tanaka A."/>
        </authorList>
    </citation>
    <scope>NUCLEOTIDE SEQUENCE [MRNA]</scope>
    <scope>CATALYTIC ACTIVITY</scope>
    <scope>TISSUE SPECIFICITY</scope>
    <scope>DEVELOPMENTAL STAGE</scope>
</reference>
<reference key="2">
    <citation type="journal article" date="2005" name="Genome Res.">
        <title>Sequence, annotation, and analysis of synteny between rice chromosome 3 and diverged grass species.</title>
        <authorList>
            <consortium name="The rice chromosome 3 sequencing consortium"/>
            <person name="Buell C.R."/>
            <person name="Yuan Q."/>
            <person name="Ouyang S."/>
            <person name="Liu J."/>
            <person name="Zhu W."/>
            <person name="Wang A."/>
            <person name="Maiti R."/>
            <person name="Haas B."/>
            <person name="Wortman J."/>
            <person name="Pertea M."/>
            <person name="Jones K.M."/>
            <person name="Kim M."/>
            <person name="Overton L."/>
            <person name="Tsitrin T."/>
            <person name="Fadrosh D."/>
            <person name="Bera J."/>
            <person name="Weaver B."/>
            <person name="Jin S."/>
            <person name="Johri S."/>
            <person name="Reardon M."/>
            <person name="Webb K."/>
            <person name="Hill J."/>
            <person name="Moffat K."/>
            <person name="Tallon L."/>
            <person name="Van Aken S."/>
            <person name="Lewis M."/>
            <person name="Utterback T."/>
            <person name="Feldblyum T."/>
            <person name="Zismann V."/>
            <person name="Iobst S."/>
            <person name="Hsiao J."/>
            <person name="de Vazeille A.R."/>
            <person name="Salzberg S.L."/>
            <person name="White O."/>
            <person name="Fraser C.M."/>
            <person name="Yu Y."/>
            <person name="Kim H."/>
            <person name="Rambo T."/>
            <person name="Currie J."/>
            <person name="Collura K."/>
            <person name="Kernodle-Thompson S."/>
            <person name="Wei F."/>
            <person name="Kudrna K."/>
            <person name="Ammiraju J.S.S."/>
            <person name="Luo M."/>
            <person name="Goicoechea J.L."/>
            <person name="Wing R.A."/>
            <person name="Henry D."/>
            <person name="Oates R."/>
            <person name="Palmer M."/>
            <person name="Pries G."/>
            <person name="Saski C."/>
            <person name="Simmons J."/>
            <person name="Soderlund C."/>
            <person name="Nelson W."/>
            <person name="de la Bastide M."/>
            <person name="Spiegel L."/>
            <person name="Nascimento L."/>
            <person name="Huang E."/>
            <person name="Preston R."/>
            <person name="Zutavern T."/>
            <person name="Palmer L."/>
            <person name="O'Shaughnessy A."/>
            <person name="Dike S."/>
            <person name="McCombie W.R."/>
            <person name="Minx P."/>
            <person name="Cordum H."/>
            <person name="Wilson R."/>
            <person name="Jin W."/>
            <person name="Lee H.R."/>
            <person name="Jiang J."/>
            <person name="Jackson S."/>
        </authorList>
    </citation>
    <scope>NUCLEOTIDE SEQUENCE [LARGE SCALE GENOMIC DNA]</scope>
    <source>
        <strain>cv. Nipponbare</strain>
    </source>
</reference>
<reference key="3">
    <citation type="journal article" date="2005" name="Nature">
        <title>The map-based sequence of the rice genome.</title>
        <authorList>
            <consortium name="International rice genome sequencing project (IRGSP)"/>
        </authorList>
    </citation>
    <scope>NUCLEOTIDE SEQUENCE [LARGE SCALE GENOMIC DNA]</scope>
    <source>
        <strain>cv. Nipponbare</strain>
    </source>
</reference>
<reference key="4">
    <citation type="journal article" date="2013" name="Rice">
        <title>Improvement of the Oryza sativa Nipponbare reference genome using next generation sequence and optical map data.</title>
        <authorList>
            <person name="Kawahara Y."/>
            <person name="de la Bastide M."/>
            <person name="Hamilton J.P."/>
            <person name="Kanamori H."/>
            <person name="McCombie W.R."/>
            <person name="Ouyang S."/>
            <person name="Schwartz D.C."/>
            <person name="Tanaka T."/>
            <person name="Wu J."/>
            <person name="Zhou S."/>
            <person name="Childs K.L."/>
            <person name="Davidson R.M."/>
            <person name="Lin H."/>
            <person name="Quesada-Ocampo L."/>
            <person name="Vaillancourt B."/>
            <person name="Sakai H."/>
            <person name="Lee S.S."/>
            <person name="Kim J."/>
            <person name="Numa H."/>
            <person name="Itoh T."/>
            <person name="Buell C.R."/>
            <person name="Matsumoto T."/>
        </authorList>
    </citation>
    <scope>GENOME REANNOTATION</scope>
    <source>
        <strain>cv. Nipponbare</strain>
    </source>
</reference>
<reference key="5">
    <citation type="journal article" date="2005" name="PLoS Biol.">
        <title>The genomes of Oryza sativa: a history of duplications.</title>
        <authorList>
            <person name="Yu J."/>
            <person name="Wang J."/>
            <person name="Lin W."/>
            <person name="Li S."/>
            <person name="Li H."/>
            <person name="Zhou J."/>
            <person name="Ni P."/>
            <person name="Dong W."/>
            <person name="Hu S."/>
            <person name="Zeng C."/>
            <person name="Zhang J."/>
            <person name="Zhang Y."/>
            <person name="Li R."/>
            <person name="Xu Z."/>
            <person name="Li S."/>
            <person name="Li X."/>
            <person name="Zheng H."/>
            <person name="Cong L."/>
            <person name="Lin L."/>
            <person name="Yin J."/>
            <person name="Geng J."/>
            <person name="Li G."/>
            <person name="Shi J."/>
            <person name="Liu J."/>
            <person name="Lv H."/>
            <person name="Li J."/>
            <person name="Wang J."/>
            <person name="Deng Y."/>
            <person name="Ran L."/>
            <person name="Shi X."/>
            <person name="Wang X."/>
            <person name="Wu Q."/>
            <person name="Li C."/>
            <person name="Ren X."/>
            <person name="Wang J."/>
            <person name="Wang X."/>
            <person name="Li D."/>
            <person name="Liu D."/>
            <person name="Zhang X."/>
            <person name="Ji Z."/>
            <person name="Zhao W."/>
            <person name="Sun Y."/>
            <person name="Zhang Z."/>
            <person name="Bao J."/>
            <person name="Han Y."/>
            <person name="Dong L."/>
            <person name="Ji J."/>
            <person name="Chen P."/>
            <person name="Wu S."/>
            <person name="Liu J."/>
            <person name="Xiao Y."/>
            <person name="Bu D."/>
            <person name="Tan J."/>
            <person name="Yang L."/>
            <person name="Ye C."/>
            <person name="Zhang J."/>
            <person name="Xu J."/>
            <person name="Zhou Y."/>
            <person name="Yu Y."/>
            <person name="Zhang B."/>
            <person name="Zhuang S."/>
            <person name="Wei H."/>
            <person name="Liu B."/>
            <person name="Lei M."/>
            <person name="Yu H."/>
            <person name="Li Y."/>
            <person name="Xu H."/>
            <person name="Wei S."/>
            <person name="He X."/>
            <person name="Fang L."/>
            <person name="Zhang Z."/>
            <person name="Zhang Y."/>
            <person name="Huang X."/>
            <person name="Su Z."/>
            <person name="Tong W."/>
            <person name="Li J."/>
            <person name="Tong Z."/>
            <person name="Li S."/>
            <person name="Ye J."/>
            <person name="Wang L."/>
            <person name="Fang L."/>
            <person name="Lei T."/>
            <person name="Chen C.-S."/>
            <person name="Chen H.-C."/>
            <person name="Xu Z."/>
            <person name="Li H."/>
            <person name="Huang H."/>
            <person name="Zhang F."/>
            <person name="Xu H."/>
            <person name="Li N."/>
            <person name="Zhao C."/>
            <person name="Li S."/>
            <person name="Dong L."/>
            <person name="Huang Y."/>
            <person name="Li L."/>
            <person name="Xi Y."/>
            <person name="Qi Q."/>
            <person name="Li W."/>
            <person name="Zhang B."/>
            <person name="Hu W."/>
            <person name="Zhang Y."/>
            <person name="Tian X."/>
            <person name="Jiao Y."/>
            <person name="Liang X."/>
            <person name="Jin J."/>
            <person name="Gao L."/>
            <person name="Zheng W."/>
            <person name="Hao B."/>
            <person name="Liu S.-M."/>
            <person name="Wang W."/>
            <person name="Yuan L."/>
            <person name="Cao M."/>
            <person name="McDermott J."/>
            <person name="Samudrala R."/>
            <person name="Wang J."/>
            <person name="Wong G.K.-S."/>
            <person name="Yang H."/>
        </authorList>
    </citation>
    <scope>NUCLEOTIDE SEQUENCE [LARGE SCALE GENOMIC DNA]</scope>
    <source>
        <strain>cv. Nipponbare</strain>
    </source>
</reference>
<reference key="6">
    <citation type="journal article" date="2009" name="Plant J.">
        <title>Two short-chain dehydrogenase/reductases, NON-YELLOW COLORING 1 and NYC1-LIKE, are required for chlorophyll b and light-harvesting complex II degradation during senescence in rice.</title>
        <authorList>
            <person name="Sato Y."/>
            <person name="Morita R."/>
            <person name="Katsuma S."/>
            <person name="Nishimura M."/>
            <person name="Tanaka A."/>
            <person name="Kusaba M."/>
        </authorList>
    </citation>
    <scope>INTERACTION WITH NCY1</scope>
    <scope>SUBCELLULAR LOCATION</scope>
    <scope>INDUCTION</scope>
    <scope>DISRUPTION PHENOTYPE</scope>
</reference>
<gene>
    <name type="primary">NOL</name>
    <name type="ordered locus">Os03g0654600</name>
    <name type="ordered locus">LOC_Os03g45194</name>
    <name type="ORF">OsJ_11943</name>
    <name type="ORF">OSJNBa0092N01.25</name>
    <name type="ORF">OSJNBb0023J24.13</name>
</gene>
<name>NOL_ORYSJ</name>
<organism>
    <name type="scientific">Oryza sativa subsp. japonica</name>
    <name type="common">Rice</name>
    <dbReference type="NCBI Taxonomy" id="39947"/>
    <lineage>
        <taxon>Eukaryota</taxon>
        <taxon>Viridiplantae</taxon>
        <taxon>Streptophyta</taxon>
        <taxon>Embryophyta</taxon>
        <taxon>Tracheophyta</taxon>
        <taxon>Spermatophyta</taxon>
        <taxon>Magnoliopsida</taxon>
        <taxon>Liliopsida</taxon>
        <taxon>Poales</taxon>
        <taxon>Poaceae</taxon>
        <taxon>BOP clade</taxon>
        <taxon>Oryzoideae</taxon>
        <taxon>Oryzeae</taxon>
        <taxon>Oryzinae</taxon>
        <taxon>Oryza</taxon>
        <taxon>Oryza sativa</taxon>
    </lineage>
</organism>